<feature type="chain" id="PRO_0000380513" description="DNA ligase">
    <location>
        <begin position="1"/>
        <end position="670"/>
    </location>
</feature>
<feature type="domain" description="BRCT" evidence="1">
    <location>
        <begin position="592"/>
        <end position="670"/>
    </location>
</feature>
<feature type="active site" description="N6-AMP-lysine intermediate" evidence="1">
    <location>
        <position position="115"/>
    </location>
</feature>
<feature type="binding site" evidence="1">
    <location>
        <begin position="32"/>
        <end position="36"/>
    </location>
    <ligand>
        <name>NAD(+)</name>
        <dbReference type="ChEBI" id="CHEBI:57540"/>
    </ligand>
</feature>
<feature type="binding site" evidence="1">
    <location>
        <begin position="81"/>
        <end position="82"/>
    </location>
    <ligand>
        <name>NAD(+)</name>
        <dbReference type="ChEBI" id="CHEBI:57540"/>
    </ligand>
</feature>
<feature type="binding site" evidence="1">
    <location>
        <position position="113"/>
    </location>
    <ligand>
        <name>NAD(+)</name>
        <dbReference type="ChEBI" id="CHEBI:57540"/>
    </ligand>
</feature>
<feature type="binding site" evidence="1">
    <location>
        <position position="136"/>
    </location>
    <ligand>
        <name>NAD(+)</name>
        <dbReference type="ChEBI" id="CHEBI:57540"/>
    </ligand>
</feature>
<feature type="binding site" evidence="1">
    <location>
        <position position="173"/>
    </location>
    <ligand>
        <name>NAD(+)</name>
        <dbReference type="ChEBI" id="CHEBI:57540"/>
    </ligand>
</feature>
<feature type="binding site" evidence="1">
    <location>
        <position position="290"/>
    </location>
    <ligand>
        <name>NAD(+)</name>
        <dbReference type="ChEBI" id="CHEBI:57540"/>
    </ligand>
</feature>
<feature type="binding site" evidence="1">
    <location>
        <position position="314"/>
    </location>
    <ligand>
        <name>NAD(+)</name>
        <dbReference type="ChEBI" id="CHEBI:57540"/>
    </ligand>
</feature>
<feature type="binding site" evidence="1">
    <location>
        <position position="408"/>
    </location>
    <ligand>
        <name>Zn(2+)</name>
        <dbReference type="ChEBI" id="CHEBI:29105"/>
    </ligand>
</feature>
<feature type="binding site" evidence="1">
    <location>
        <position position="411"/>
    </location>
    <ligand>
        <name>Zn(2+)</name>
        <dbReference type="ChEBI" id="CHEBI:29105"/>
    </ligand>
</feature>
<feature type="binding site" evidence="1">
    <location>
        <position position="426"/>
    </location>
    <ligand>
        <name>Zn(2+)</name>
        <dbReference type="ChEBI" id="CHEBI:29105"/>
    </ligand>
</feature>
<feature type="binding site" evidence="1">
    <location>
        <position position="432"/>
    </location>
    <ligand>
        <name>Zn(2+)</name>
        <dbReference type="ChEBI" id="CHEBI:29105"/>
    </ligand>
</feature>
<evidence type="ECO:0000255" key="1">
    <source>
        <dbReference type="HAMAP-Rule" id="MF_01588"/>
    </source>
</evidence>
<accession>B2K917</accession>
<gene>
    <name evidence="1" type="primary">ligA</name>
    <name type="ordered locus">YPTS_2811</name>
</gene>
<organism>
    <name type="scientific">Yersinia pseudotuberculosis serotype IB (strain PB1/+)</name>
    <dbReference type="NCBI Taxonomy" id="502801"/>
    <lineage>
        <taxon>Bacteria</taxon>
        <taxon>Pseudomonadati</taxon>
        <taxon>Pseudomonadota</taxon>
        <taxon>Gammaproteobacteria</taxon>
        <taxon>Enterobacterales</taxon>
        <taxon>Yersiniaceae</taxon>
        <taxon>Yersinia</taxon>
    </lineage>
</organism>
<keyword id="KW-0227">DNA damage</keyword>
<keyword id="KW-0234">DNA repair</keyword>
<keyword id="KW-0235">DNA replication</keyword>
<keyword id="KW-0436">Ligase</keyword>
<keyword id="KW-0460">Magnesium</keyword>
<keyword id="KW-0464">Manganese</keyword>
<keyword id="KW-0479">Metal-binding</keyword>
<keyword id="KW-0520">NAD</keyword>
<keyword id="KW-0862">Zinc</keyword>
<sequence>MESIIQQINQLRTSLRHHEHQYHVLDAPEIPDAEYDRMMQQLRDLEAQHPELVTNDSPTQRVGAAPLDAFEQVKHEVPMLSLDNVFDEESYLAFDKRVHDRLKTAEPLTFCCELKLDGLAVSLLYENGELVRAATRGDGTTGENITANVRTIRAIPLRLHGDNVPRRVEVRGEVFMPQAGFEQLNEEARRKGGKVFANPRNAAAGSLRQLDPRITAKRPLTFFCYGVGLLDGGELPRSHIQCLMQFKAWGLPVSERVKLCTGSDQVIAFYRQIEQDRAGLGFDIDGVVIKVDDLVLQEQLGFVARAPRWATAFKFPAQEQITQVREVEFQVGRTGAITPVARLEPVQVAGVIVSNATLHNADEIERLGLRIGDTVIVRRAGDVIPQVVGVVMEQRPDDTKEITFPSQCPVCGSDIERVEGEAVARCTGGLFCAAQRKEALKHFVSRRALDVDGMGDKIIEQLVEKQYVENPADLFQLTAGKLTGLDRMGPKSAQNLIAALEKAKQTTFARFLYALGIREVGEATAANLAAHFRTLDNLRAADIETLKSVPDVGEVVAKHVMNFLSEEHNQKVIEELEKVVSWPEPQQIVVEEIDSPFAGKTVVLTGSLTILSRDEAKDRLTALGAKVSGSVSKKTHLVIAGEAAGSKLAKAQELGIKVIDEAEMIRLLGE</sequence>
<name>DNLJ_YERPB</name>
<protein>
    <recommendedName>
        <fullName evidence="1">DNA ligase</fullName>
        <ecNumber evidence="1">6.5.1.2</ecNumber>
    </recommendedName>
    <alternativeName>
        <fullName evidence="1">Polydeoxyribonucleotide synthase [NAD(+)]</fullName>
    </alternativeName>
</protein>
<dbReference type="EC" id="6.5.1.2" evidence="1"/>
<dbReference type="EMBL" id="CP001048">
    <property type="protein sequence ID" value="ACC89768.1"/>
    <property type="molecule type" value="Genomic_DNA"/>
</dbReference>
<dbReference type="RefSeq" id="WP_011192735.1">
    <property type="nucleotide sequence ID" value="NZ_CP009780.1"/>
</dbReference>
<dbReference type="SMR" id="B2K917"/>
<dbReference type="GeneID" id="49785276"/>
<dbReference type="KEGG" id="ypb:YPTS_2811"/>
<dbReference type="PATRIC" id="fig|502801.10.peg.2237"/>
<dbReference type="GO" id="GO:0005829">
    <property type="term" value="C:cytosol"/>
    <property type="evidence" value="ECO:0007669"/>
    <property type="project" value="TreeGrafter"/>
</dbReference>
<dbReference type="GO" id="GO:0003677">
    <property type="term" value="F:DNA binding"/>
    <property type="evidence" value="ECO:0007669"/>
    <property type="project" value="InterPro"/>
</dbReference>
<dbReference type="GO" id="GO:0003911">
    <property type="term" value="F:DNA ligase (NAD+) activity"/>
    <property type="evidence" value="ECO:0007669"/>
    <property type="project" value="UniProtKB-UniRule"/>
</dbReference>
<dbReference type="GO" id="GO:0046872">
    <property type="term" value="F:metal ion binding"/>
    <property type="evidence" value="ECO:0007669"/>
    <property type="project" value="UniProtKB-KW"/>
</dbReference>
<dbReference type="GO" id="GO:0006281">
    <property type="term" value="P:DNA repair"/>
    <property type="evidence" value="ECO:0007669"/>
    <property type="project" value="UniProtKB-KW"/>
</dbReference>
<dbReference type="GO" id="GO:0006260">
    <property type="term" value="P:DNA replication"/>
    <property type="evidence" value="ECO:0007669"/>
    <property type="project" value="UniProtKB-KW"/>
</dbReference>
<dbReference type="CDD" id="cd17748">
    <property type="entry name" value="BRCT_DNA_ligase_like"/>
    <property type="match status" value="1"/>
</dbReference>
<dbReference type="CDD" id="cd00114">
    <property type="entry name" value="LIGANc"/>
    <property type="match status" value="1"/>
</dbReference>
<dbReference type="FunFam" id="1.10.150.20:FF:000006">
    <property type="entry name" value="DNA ligase"/>
    <property type="match status" value="1"/>
</dbReference>
<dbReference type="FunFam" id="1.10.150.20:FF:000007">
    <property type="entry name" value="DNA ligase"/>
    <property type="match status" value="1"/>
</dbReference>
<dbReference type="FunFam" id="1.10.287.610:FF:000002">
    <property type="entry name" value="DNA ligase"/>
    <property type="match status" value="1"/>
</dbReference>
<dbReference type="FunFam" id="2.40.50.140:FF:000012">
    <property type="entry name" value="DNA ligase"/>
    <property type="match status" value="1"/>
</dbReference>
<dbReference type="FunFam" id="3.30.470.30:FF:000001">
    <property type="entry name" value="DNA ligase"/>
    <property type="match status" value="1"/>
</dbReference>
<dbReference type="FunFam" id="3.40.50.10190:FF:000004">
    <property type="entry name" value="DNA ligase"/>
    <property type="match status" value="1"/>
</dbReference>
<dbReference type="FunFam" id="6.20.10.30:FF:000001">
    <property type="entry name" value="DNA ligase"/>
    <property type="match status" value="1"/>
</dbReference>
<dbReference type="Gene3D" id="6.20.10.30">
    <property type="match status" value="1"/>
</dbReference>
<dbReference type="Gene3D" id="1.10.150.20">
    <property type="entry name" value="5' to 3' exonuclease, C-terminal subdomain"/>
    <property type="match status" value="2"/>
</dbReference>
<dbReference type="Gene3D" id="3.40.50.10190">
    <property type="entry name" value="BRCT domain"/>
    <property type="match status" value="1"/>
</dbReference>
<dbReference type="Gene3D" id="3.30.470.30">
    <property type="entry name" value="DNA ligase/mRNA capping enzyme"/>
    <property type="match status" value="1"/>
</dbReference>
<dbReference type="Gene3D" id="1.10.287.610">
    <property type="entry name" value="Helix hairpin bin"/>
    <property type="match status" value="1"/>
</dbReference>
<dbReference type="Gene3D" id="2.40.50.140">
    <property type="entry name" value="Nucleic acid-binding proteins"/>
    <property type="match status" value="1"/>
</dbReference>
<dbReference type="HAMAP" id="MF_01588">
    <property type="entry name" value="DNA_ligase_A"/>
    <property type="match status" value="1"/>
</dbReference>
<dbReference type="InterPro" id="IPR001357">
    <property type="entry name" value="BRCT_dom"/>
</dbReference>
<dbReference type="InterPro" id="IPR036420">
    <property type="entry name" value="BRCT_dom_sf"/>
</dbReference>
<dbReference type="InterPro" id="IPR041663">
    <property type="entry name" value="DisA/LigA_HHH"/>
</dbReference>
<dbReference type="InterPro" id="IPR001679">
    <property type="entry name" value="DNA_ligase"/>
</dbReference>
<dbReference type="InterPro" id="IPR018239">
    <property type="entry name" value="DNA_ligase_AS"/>
</dbReference>
<dbReference type="InterPro" id="IPR033136">
    <property type="entry name" value="DNA_ligase_CS"/>
</dbReference>
<dbReference type="InterPro" id="IPR013839">
    <property type="entry name" value="DNAligase_adenylation"/>
</dbReference>
<dbReference type="InterPro" id="IPR013840">
    <property type="entry name" value="DNAligase_N"/>
</dbReference>
<dbReference type="InterPro" id="IPR003583">
    <property type="entry name" value="Hlx-hairpin-Hlx_DNA-bd_motif"/>
</dbReference>
<dbReference type="InterPro" id="IPR012340">
    <property type="entry name" value="NA-bd_OB-fold"/>
</dbReference>
<dbReference type="InterPro" id="IPR004150">
    <property type="entry name" value="NAD_DNA_ligase_OB"/>
</dbReference>
<dbReference type="InterPro" id="IPR010994">
    <property type="entry name" value="RuvA_2-like"/>
</dbReference>
<dbReference type="InterPro" id="IPR004149">
    <property type="entry name" value="Znf_DNAligase_C4"/>
</dbReference>
<dbReference type="NCBIfam" id="TIGR00575">
    <property type="entry name" value="dnlj"/>
    <property type="match status" value="1"/>
</dbReference>
<dbReference type="NCBIfam" id="NF005932">
    <property type="entry name" value="PRK07956.1"/>
    <property type="match status" value="1"/>
</dbReference>
<dbReference type="PANTHER" id="PTHR23389">
    <property type="entry name" value="CHROMOSOME TRANSMISSION FIDELITY FACTOR 18"/>
    <property type="match status" value="1"/>
</dbReference>
<dbReference type="PANTHER" id="PTHR23389:SF9">
    <property type="entry name" value="DNA LIGASE"/>
    <property type="match status" value="1"/>
</dbReference>
<dbReference type="Pfam" id="PF00533">
    <property type="entry name" value="BRCT"/>
    <property type="match status" value="1"/>
</dbReference>
<dbReference type="Pfam" id="PF01653">
    <property type="entry name" value="DNA_ligase_aden"/>
    <property type="match status" value="1"/>
</dbReference>
<dbReference type="Pfam" id="PF03120">
    <property type="entry name" value="DNA_ligase_OB"/>
    <property type="match status" value="1"/>
</dbReference>
<dbReference type="Pfam" id="PF03119">
    <property type="entry name" value="DNA_ligase_ZBD"/>
    <property type="match status" value="1"/>
</dbReference>
<dbReference type="Pfam" id="PF12826">
    <property type="entry name" value="HHH_2"/>
    <property type="match status" value="1"/>
</dbReference>
<dbReference type="Pfam" id="PF14520">
    <property type="entry name" value="HHH_5"/>
    <property type="match status" value="1"/>
</dbReference>
<dbReference type="Pfam" id="PF22745">
    <property type="entry name" value="Nlig-Ia"/>
    <property type="match status" value="1"/>
</dbReference>
<dbReference type="PIRSF" id="PIRSF001604">
    <property type="entry name" value="LigA"/>
    <property type="match status" value="1"/>
</dbReference>
<dbReference type="SMART" id="SM00292">
    <property type="entry name" value="BRCT"/>
    <property type="match status" value="1"/>
</dbReference>
<dbReference type="SMART" id="SM00278">
    <property type="entry name" value="HhH1"/>
    <property type="match status" value="4"/>
</dbReference>
<dbReference type="SMART" id="SM00532">
    <property type="entry name" value="LIGANc"/>
    <property type="match status" value="1"/>
</dbReference>
<dbReference type="SUPFAM" id="SSF52113">
    <property type="entry name" value="BRCT domain"/>
    <property type="match status" value="1"/>
</dbReference>
<dbReference type="SUPFAM" id="SSF56091">
    <property type="entry name" value="DNA ligase/mRNA capping enzyme, catalytic domain"/>
    <property type="match status" value="1"/>
</dbReference>
<dbReference type="SUPFAM" id="SSF50249">
    <property type="entry name" value="Nucleic acid-binding proteins"/>
    <property type="match status" value="1"/>
</dbReference>
<dbReference type="SUPFAM" id="SSF47781">
    <property type="entry name" value="RuvA domain 2-like"/>
    <property type="match status" value="1"/>
</dbReference>
<dbReference type="PROSITE" id="PS50172">
    <property type="entry name" value="BRCT"/>
    <property type="match status" value="1"/>
</dbReference>
<dbReference type="PROSITE" id="PS01055">
    <property type="entry name" value="DNA_LIGASE_N1"/>
    <property type="match status" value="1"/>
</dbReference>
<dbReference type="PROSITE" id="PS01056">
    <property type="entry name" value="DNA_LIGASE_N2"/>
    <property type="match status" value="1"/>
</dbReference>
<proteinExistence type="inferred from homology"/>
<comment type="function">
    <text evidence="1">DNA ligase that catalyzes the formation of phosphodiester linkages between 5'-phosphoryl and 3'-hydroxyl groups in double-stranded DNA using NAD as a coenzyme and as the energy source for the reaction. It is essential for DNA replication and repair of damaged DNA.</text>
</comment>
<comment type="catalytic activity">
    <reaction evidence="1">
        <text>NAD(+) + (deoxyribonucleotide)n-3'-hydroxyl + 5'-phospho-(deoxyribonucleotide)m = (deoxyribonucleotide)n+m + AMP + beta-nicotinamide D-nucleotide.</text>
        <dbReference type="EC" id="6.5.1.2"/>
    </reaction>
</comment>
<comment type="cofactor">
    <cofactor evidence="1">
        <name>Mg(2+)</name>
        <dbReference type="ChEBI" id="CHEBI:18420"/>
    </cofactor>
    <cofactor evidence="1">
        <name>Mn(2+)</name>
        <dbReference type="ChEBI" id="CHEBI:29035"/>
    </cofactor>
</comment>
<comment type="similarity">
    <text evidence="1">Belongs to the NAD-dependent DNA ligase family. LigA subfamily.</text>
</comment>
<reference key="1">
    <citation type="submission" date="2008-04" db="EMBL/GenBank/DDBJ databases">
        <title>Complete sequence of Yersinia pseudotuberculosis PB1/+.</title>
        <authorList>
            <person name="Copeland A."/>
            <person name="Lucas S."/>
            <person name="Lapidus A."/>
            <person name="Glavina del Rio T."/>
            <person name="Dalin E."/>
            <person name="Tice H."/>
            <person name="Bruce D."/>
            <person name="Goodwin L."/>
            <person name="Pitluck S."/>
            <person name="Munk A.C."/>
            <person name="Brettin T."/>
            <person name="Detter J.C."/>
            <person name="Han C."/>
            <person name="Tapia R."/>
            <person name="Schmutz J."/>
            <person name="Larimer F."/>
            <person name="Land M."/>
            <person name="Hauser L."/>
            <person name="Challacombe J.F."/>
            <person name="Green L."/>
            <person name="Lindler L.E."/>
            <person name="Nikolich M.P."/>
            <person name="Richardson P."/>
        </authorList>
    </citation>
    <scope>NUCLEOTIDE SEQUENCE [LARGE SCALE GENOMIC DNA]</scope>
    <source>
        <strain>PB1/+</strain>
    </source>
</reference>